<organism>
    <name type="scientific">Xylella fastidiosa (strain Temecula1 / ATCC 700964)</name>
    <dbReference type="NCBI Taxonomy" id="183190"/>
    <lineage>
        <taxon>Bacteria</taxon>
        <taxon>Pseudomonadati</taxon>
        <taxon>Pseudomonadota</taxon>
        <taxon>Gammaproteobacteria</taxon>
        <taxon>Lysobacterales</taxon>
        <taxon>Lysobacteraceae</taxon>
        <taxon>Xylella</taxon>
    </lineage>
</organism>
<proteinExistence type="inferred from homology"/>
<feature type="chain" id="PRO_0000134837" description="6,7-dimethyl-8-ribityllumazine synthase">
    <location>
        <begin position="1"/>
        <end position="154"/>
    </location>
</feature>
<feature type="active site" description="Proton donor" evidence="1">
    <location>
        <position position="88"/>
    </location>
</feature>
<feature type="binding site" evidence="1">
    <location>
        <position position="22"/>
    </location>
    <ligand>
        <name>5-amino-6-(D-ribitylamino)uracil</name>
        <dbReference type="ChEBI" id="CHEBI:15934"/>
    </ligand>
</feature>
<feature type="binding site" evidence="1">
    <location>
        <begin position="56"/>
        <end position="58"/>
    </location>
    <ligand>
        <name>5-amino-6-(D-ribitylamino)uracil</name>
        <dbReference type="ChEBI" id="CHEBI:15934"/>
    </ligand>
</feature>
<feature type="binding site" evidence="1">
    <location>
        <begin position="80"/>
        <end position="82"/>
    </location>
    <ligand>
        <name>5-amino-6-(D-ribitylamino)uracil</name>
        <dbReference type="ChEBI" id="CHEBI:15934"/>
    </ligand>
</feature>
<feature type="binding site" evidence="1">
    <location>
        <begin position="85"/>
        <end position="86"/>
    </location>
    <ligand>
        <name>(2S)-2-hydroxy-3-oxobutyl phosphate</name>
        <dbReference type="ChEBI" id="CHEBI:58830"/>
    </ligand>
</feature>
<feature type="binding site" evidence="1">
    <location>
        <position position="113"/>
    </location>
    <ligand>
        <name>5-amino-6-(D-ribitylamino)uracil</name>
        <dbReference type="ChEBI" id="CHEBI:15934"/>
    </ligand>
</feature>
<feature type="binding site" evidence="1">
    <location>
        <position position="127"/>
    </location>
    <ligand>
        <name>(2S)-2-hydroxy-3-oxobutyl phosphate</name>
        <dbReference type="ChEBI" id="CHEBI:58830"/>
    </ligand>
</feature>
<dbReference type="EC" id="2.5.1.78" evidence="1"/>
<dbReference type="EMBL" id="AE009442">
    <property type="protein sequence ID" value="AAO29579.1"/>
    <property type="molecule type" value="Genomic_DNA"/>
</dbReference>
<dbReference type="RefSeq" id="WP_004086411.1">
    <property type="nucleotide sequence ID" value="NC_004556.1"/>
</dbReference>
<dbReference type="SMR" id="Q87AS7"/>
<dbReference type="GeneID" id="93905590"/>
<dbReference type="KEGG" id="xft:PD_1744"/>
<dbReference type="HOGENOM" id="CLU_089358_1_2_6"/>
<dbReference type="UniPathway" id="UPA00275">
    <property type="reaction ID" value="UER00404"/>
</dbReference>
<dbReference type="Proteomes" id="UP000002516">
    <property type="component" value="Chromosome"/>
</dbReference>
<dbReference type="GO" id="GO:0005829">
    <property type="term" value="C:cytosol"/>
    <property type="evidence" value="ECO:0007669"/>
    <property type="project" value="TreeGrafter"/>
</dbReference>
<dbReference type="GO" id="GO:0009349">
    <property type="term" value="C:riboflavin synthase complex"/>
    <property type="evidence" value="ECO:0007669"/>
    <property type="project" value="InterPro"/>
</dbReference>
<dbReference type="GO" id="GO:0000906">
    <property type="term" value="F:6,7-dimethyl-8-ribityllumazine synthase activity"/>
    <property type="evidence" value="ECO:0007669"/>
    <property type="project" value="UniProtKB-UniRule"/>
</dbReference>
<dbReference type="GO" id="GO:0009231">
    <property type="term" value="P:riboflavin biosynthetic process"/>
    <property type="evidence" value="ECO:0007669"/>
    <property type="project" value="UniProtKB-UniRule"/>
</dbReference>
<dbReference type="CDD" id="cd09209">
    <property type="entry name" value="Lumazine_synthase-I"/>
    <property type="match status" value="1"/>
</dbReference>
<dbReference type="Gene3D" id="3.40.50.960">
    <property type="entry name" value="Lumazine/riboflavin synthase"/>
    <property type="match status" value="1"/>
</dbReference>
<dbReference type="HAMAP" id="MF_00178">
    <property type="entry name" value="Lumazine_synth"/>
    <property type="match status" value="1"/>
</dbReference>
<dbReference type="InterPro" id="IPR034964">
    <property type="entry name" value="LS"/>
</dbReference>
<dbReference type="InterPro" id="IPR002180">
    <property type="entry name" value="LS/RS"/>
</dbReference>
<dbReference type="InterPro" id="IPR036467">
    <property type="entry name" value="LS/RS_sf"/>
</dbReference>
<dbReference type="NCBIfam" id="TIGR00114">
    <property type="entry name" value="lumazine-synth"/>
    <property type="match status" value="1"/>
</dbReference>
<dbReference type="PANTHER" id="PTHR21058:SF0">
    <property type="entry name" value="6,7-DIMETHYL-8-RIBITYLLUMAZINE SYNTHASE"/>
    <property type="match status" value="1"/>
</dbReference>
<dbReference type="PANTHER" id="PTHR21058">
    <property type="entry name" value="6,7-DIMETHYL-8-RIBITYLLUMAZINE SYNTHASE DMRL SYNTHASE LUMAZINE SYNTHASE"/>
    <property type="match status" value="1"/>
</dbReference>
<dbReference type="Pfam" id="PF00885">
    <property type="entry name" value="DMRL_synthase"/>
    <property type="match status" value="1"/>
</dbReference>
<dbReference type="SUPFAM" id="SSF52121">
    <property type="entry name" value="Lumazine synthase"/>
    <property type="match status" value="1"/>
</dbReference>
<keyword id="KW-1185">Reference proteome</keyword>
<keyword id="KW-0686">Riboflavin biosynthesis</keyword>
<keyword id="KW-0808">Transferase</keyword>
<sequence length="154" mass="16165">MSHYEGDLRPAGARFVIVCSRWNARITDALVAGACHSLVDNGVPDDAVDVVRVPGAWEIPIVANLLAQAGQHAAIIALGCVVRGDTRHYEHVADLCAEGMMSVQMQTGVPVLNGVLAVECIKDAEMRAGGSHGNKGAETALAALEMVSLLEKLP</sequence>
<gene>
    <name evidence="1" type="primary">ribH</name>
    <name type="ordered locus">PD_1744</name>
</gene>
<protein>
    <recommendedName>
        <fullName evidence="1">6,7-dimethyl-8-ribityllumazine synthase</fullName>
        <shortName evidence="1">DMRL synthase</shortName>
        <shortName evidence="1">LS</shortName>
        <shortName evidence="1">Lumazine synthase</shortName>
        <ecNumber evidence="1">2.5.1.78</ecNumber>
    </recommendedName>
</protein>
<name>RISB_XYLFT</name>
<comment type="function">
    <text evidence="1">Catalyzes the formation of 6,7-dimethyl-8-ribityllumazine by condensation of 5-amino-6-(D-ribitylamino)uracil with 3,4-dihydroxy-2-butanone 4-phosphate. This is the penultimate step in the biosynthesis of riboflavin.</text>
</comment>
<comment type="catalytic activity">
    <reaction evidence="1">
        <text>(2S)-2-hydroxy-3-oxobutyl phosphate + 5-amino-6-(D-ribitylamino)uracil = 6,7-dimethyl-8-(1-D-ribityl)lumazine + phosphate + 2 H2O + H(+)</text>
        <dbReference type="Rhea" id="RHEA:26152"/>
        <dbReference type="ChEBI" id="CHEBI:15377"/>
        <dbReference type="ChEBI" id="CHEBI:15378"/>
        <dbReference type="ChEBI" id="CHEBI:15934"/>
        <dbReference type="ChEBI" id="CHEBI:43474"/>
        <dbReference type="ChEBI" id="CHEBI:58201"/>
        <dbReference type="ChEBI" id="CHEBI:58830"/>
        <dbReference type="EC" id="2.5.1.78"/>
    </reaction>
</comment>
<comment type="pathway">
    <text evidence="1">Cofactor biosynthesis; riboflavin biosynthesis; riboflavin from 2-hydroxy-3-oxobutyl phosphate and 5-amino-6-(D-ribitylamino)uracil: step 1/2.</text>
</comment>
<comment type="subunit">
    <text evidence="1">Forms an icosahedral capsid composed of 60 subunits, arranged as a dodecamer of pentamers.</text>
</comment>
<comment type="similarity">
    <text evidence="1">Belongs to the DMRL synthase family.</text>
</comment>
<reference key="1">
    <citation type="journal article" date="2003" name="J. Bacteriol.">
        <title>Comparative analyses of the complete genome sequences of Pierce's disease and citrus variegated chlorosis strains of Xylella fastidiosa.</title>
        <authorList>
            <person name="Van Sluys M.A."/>
            <person name="de Oliveira M.C."/>
            <person name="Monteiro-Vitorello C.B."/>
            <person name="Miyaki C.Y."/>
            <person name="Furlan L.R."/>
            <person name="Camargo L.E.A."/>
            <person name="da Silva A.C.R."/>
            <person name="Moon D.H."/>
            <person name="Takita M.A."/>
            <person name="Lemos E.G.M."/>
            <person name="Machado M.A."/>
            <person name="Ferro M.I.T."/>
            <person name="da Silva F.R."/>
            <person name="Goldman M.H.S."/>
            <person name="Goldman G.H."/>
            <person name="Lemos M.V.F."/>
            <person name="El-Dorry H."/>
            <person name="Tsai S.M."/>
            <person name="Carrer H."/>
            <person name="Carraro D.M."/>
            <person name="de Oliveira R.C."/>
            <person name="Nunes L.R."/>
            <person name="Siqueira W.J."/>
            <person name="Coutinho L.L."/>
            <person name="Kimura E.T."/>
            <person name="Ferro E.S."/>
            <person name="Harakava R."/>
            <person name="Kuramae E.E."/>
            <person name="Marino C.L."/>
            <person name="Giglioti E."/>
            <person name="Abreu I.L."/>
            <person name="Alves L.M.C."/>
            <person name="do Amaral A.M."/>
            <person name="Baia G.S."/>
            <person name="Blanco S.R."/>
            <person name="Brito M.S."/>
            <person name="Cannavan F.S."/>
            <person name="Celestino A.V."/>
            <person name="da Cunha A.F."/>
            <person name="Fenille R.C."/>
            <person name="Ferro J.A."/>
            <person name="Formighieri E.F."/>
            <person name="Kishi L.T."/>
            <person name="Leoni S.G."/>
            <person name="Oliveira A.R."/>
            <person name="Rosa V.E. Jr."/>
            <person name="Sassaki F.T."/>
            <person name="Sena J.A.D."/>
            <person name="de Souza A.A."/>
            <person name="Truffi D."/>
            <person name="Tsukumo F."/>
            <person name="Yanai G.M."/>
            <person name="Zaros L.G."/>
            <person name="Civerolo E.L."/>
            <person name="Simpson A.J.G."/>
            <person name="Almeida N.F. Jr."/>
            <person name="Setubal J.C."/>
            <person name="Kitajima J.P."/>
        </authorList>
    </citation>
    <scope>NUCLEOTIDE SEQUENCE [LARGE SCALE GENOMIC DNA]</scope>
    <source>
        <strain>Temecula1 / ATCC 700964</strain>
    </source>
</reference>
<evidence type="ECO:0000255" key="1">
    <source>
        <dbReference type="HAMAP-Rule" id="MF_00178"/>
    </source>
</evidence>
<accession>Q87AS7</accession>